<organism>
    <name type="scientific">Macaca fascicularis</name>
    <name type="common">Crab-eating macaque</name>
    <name type="synonym">Cynomolgus monkey</name>
    <dbReference type="NCBI Taxonomy" id="9541"/>
    <lineage>
        <taxon>Eukaryota</taxon>
        <taxon>Metazoa</taxon>
        <taxon>Chordata</taxon>
        <taxon>Craniata</taxon>
        <taxon>Vertebrata</taxon>
        <taxon>Euteleostomi</taxon>
        <taxon>Mammalia</taxon>
        <taxon>Eutheria</taxon>
        <taxon>Euarchontoglires</taxon>
        <taxon>Primates</taxon>
        <taxon>Haplorrhini</taxon>
        <taxon>Catarrhini</taxon>
        <taxon>Cercopithecidae</taxon>
        <taxon>Cercopithecinae</taxon>
        <taxon>Macaca</taxon>
    </lineage>
</organism>
<accession>Q4R7Y4</accession>
<comment type="function">
    <text evidence="1 2">Involved in the recruitment, assembly and/or regulation of a variety of signaling molecules. Interacts with a wide variety of proteins and plays a role in many cellular processes. Component of the 40S ribosomal subunit involved in translational repression. Binds to and stabilizes activated protein kinase C (PKC), increasing PKC-mediated phosphorylation. May recruit activated PKC to the ribosome, leading to phosphorylation of EIF6. Inhibits the activity of SRC kinases including SRC, LCK and YES1. Inhibits cell growth by prolonging the G0/G1 phase of the cell cycle. Enhances phosphorylation of BMAL1 by PRKCA and inhibits transcriptional activity of the BMAL1-CLOCK heterodimer. Facilitates ligand-independent nuclear translocation of AR following PKC activation, represses AR transactivation activity and is required for phosphorylation of AR by SRC. Modulates IGF1R-dependent integrin signaling and promotes cell spreading and contact with the extracellular matrix. Involved in PKC-dependent translocation of ADAM12 to the cell membrane. Promotes the ubiquitination and proteasome-mediated degradation of proteins such as CLEC1B and HIF1A. Required for VANGL2 membrane localization, inhibits Wnt signaling, and regulates cellular polarization and oriented cell division during gastrulation. Required for PTK2/FAK1 phosphorylation and dephosphorylation. Regulates internalization of the muscarinic receptor CHRM2. Promotes apoptosis by increasing oligomerization of BAX and disrupting the interaction of BAX with the anti-apoptotic factor BCL2L. Inhibits TRPM6 channel activity. Regulates cell surface expression of some GPCRs such as TBXA2R. Plays a role in regulation of FLT1-mediated cell migration (By similarity). Involved in the transport of ABCB4 from the Golgi to the apical bile canalicular membrane (By similarity).</text>
</comment>
<comment type="subunit">
    <text evidence="1 2">Interacts with CPNE3 (By similarity). May interact with ABCB4 (By similarity). Component of the small (40S) ribosomal subunit. Exists as a monomer and also forms oligomers. Binds NHERF1. Forms a ternary complex with TRIM63 and PRKCE. Interacts with HABP4, KRT1 and OTUB1. Interacts with SRC (via SH2 domain); the interaction is enhanced by tyrosine phosphorylation of RACK1. Recruited in a circadian manner into a nuclear complex which also includes BMAL1 and PRKCA. Interacts with AR. Interacts with IGF1R but not with INSR. Interacts with ADAM12. Interacts with CLEC1B (via N-terminal region) and with HIF1A; the interaction promotes their degradation. Interacts with RHOA; this enhances RHOA activation and promotes cell migration. Interacts with CHRM2; the interaction regulates CHRM2 internalization. Interacts with TRPM6 (via kinase domain). Interacts with PTK2/FAK1; required for PTK2/FAK1 phosphorylation and dephosphorylation. Interacts with FLT1. Interacts with HRAS. Interacts with LARP4B. Interacts with PKD2L1 (By similarity).</text>
</comment>
<comment type="subcellular location">
    <subcellularLocation>
        <location evidence="2">Cell membrane</location>
        <topology evidence="2">Peripheral membrane protein</topology>
    </subcellularLocation>
    <subcellularLocation>
        <location evidence="2">Cytoplasm</location>
    </subcellularLocation>
    <subcellularLocation>
        <location evidence="2">Cytoplasm</location>
        <location evidence="2">Perinuclear region</location>
    </subcellularLocation>
    <subcellularLocation>
        <location evidence="2">Nucleus</location>
    </subcellularLocation>
    <subcellularLocation>
        <location evidence="3">Perikaryon</location>
    </subcellularLocation>
    <subcellularLocation>
        <location evidence="3">Cell projection</location>
        <location evidence="3">Dendrite</location>
    </subcellularLocation>
    <text evidence="2 3">Recruited to the plasma membrane through interaction with KRT1 which binds to membrane-bound ITGB1. Also associated with the membrane in oncogene-transformed cells. PKC activation induces translocation from the perinuclear region to the cell periphery (By similarity). In the brain, detected mainly in cell bodies and dendrites with little expression in axonal fibers or nuclei (By similarity).</text>
</comment>
<comment type="PTM">
    <text evidence="1">Phosphorylated on Tyr-228 and/or Tyr-246 by SRC. This is required for binding to SRC (By similarity).</text>
</comment>
<comment type="similarity">
    <text evidence="4">Belongs to the WD repeat G protein beta family. Ribosomal protein RACK1 subfamily.</text>
</comment>
<dbReference type="EMBL" id="AB168677">
    <property type="protein sequence ID" value="BAE00788.1"/>
    <property type="molecule type" value="mRNA"/>
</dbReference>
<dbReference type="RefSeq" id="XP_005558900.1">
    <property type="nucleotide sequence ID" value="XM_005558843.2"/>
</dbReference>
<dbReference type="SMR" id="Q4R7Y4"/>
<dbReference type="STRING" id="9541.ENSMFAP00000023220"/>
<dbReference type="GeneID" id="101865558"/>
<dbReference type="KEGG" id="mcf:101865558"/>
<dbReference type="CTD" id="10399"/>
<dbReference type="eggNOG" id="KOG0279">
    <property type="taxonomic scope" value="Eukaryota"/>
</dbReference>
<dbReference type="Proteomes" id="UP000233100">
    <property type="component" value="Unplaced"/>
</dbReference>
<dbReference type="GO" id="GO:0005737">
    <property type="term" value="C:cytoplasm"/>
    <property type="evidence" value="ECO:0000250"/>
    <property type="project" value="UniProtKB"/>
</dbReference>
<dbReference type="GO" id="GO:0030425">
    <property type="term" value="C:dendrite"/>
    <property type="evidence" value="ECO:0007669"/>
    <property type="project" value="UniProtKB-SubCell"/>
</dbReference>
<dbReference type="GO" id="GO:0030496">
    <property type="term" value="C:midbody"/>
    <property type="evidence" value="ECO:0000250"/>
    <property type="project" value="UniProtKB"/>
</dbReference>
<dbReference type="GO" id="GO:0043025">
    <property type="term" value="C:neuronal cell body"/>
    <property type="evidence" value="ECO:0000250"/>
    <property type="project" value="UniProtKB"/>
</dbReference>
<dbReference type="GO" id="GO:0005634">
    <property type="term" value="C:nucleus"/>
    <property type="evidence" value="ECO:0000250"/>
    <property type="project" value="UniProtKB"/>
</dbReference>
<dbReference type="GO" id="GO:0043204">
    <property type="term" value="C:perikaryon"/>
    <property type="evidence" value="ECO:0007669"/>
    <property type="project" value="UniProtKB-SubCell"/>
</dbReference>
<dbReference type="GO" id="GO:0048471">
    <property type="term" value="C:perinuclear region of cytoplasm"/>
    <property type="evidence" value="ECO:0000250"/>
    <property type="project" value="UniProtKB"/>
</dbReference>
<dbReference type="GO" id="GO:0001891">
    <property type="term" value="C:phagocytic cup"/>
    <property type="evidence" value="ECO:0000250"/>
    <property type="project" value="UniProtKB"/>
</dbReference>
<dbReference type="GO" id="GO:1990904">
    <property type="term" value="C:ribonucleoprotein complex"/>
    <property type="evidence" value="ECO:0007669"/>
    <property type="project" value="UniProtKB-KW"/>
</dbReference>
<dbReference type="GO" id="GO:0005840">
    <property type="term" value="C:ribosome"/>
    <property type="evidence" value="ECO:0007669"/>
    <property type="project" value="UniProtKB-KW"/>
</dbReference>
<dbReference type="GO" id="GO:0005080">
    <property type="term" value="F:protein kinase C binding"/>
    <property type="evidence" value="ECO:0000250"/>
    <property type="project" value="UniProtKB"/>
</dbReference>
<dbReference type="GO" id="GO:0030292">
    <property type="term" value="F:protein tyrosine kinase inhibitor activity"/>
    <property type="evidence" value="ECO:0000250"/>
    <property type="project" value="UniProtKB"/>
</dbReference>
<dbReference type="GO" id="GO:0030971">
    <property type="term" value="F:receptor tyrosine kinase binding"/>
    <property type="evidence" value="ECO:0000250"/>
    <property type="project" value="UniProtKB"/>
</dbReference>
<dbReference type="GO" id="GO:0043022">
    <property type="term" value="F:ribosome binding"/>
    <property type="evidence" value="ECO:0007669"/>
    <property type="project" value="InterPro"/>
</dbReference>
<dbReference type="GO" id="GO:0042169">
    <property type="term" value="F:SH2 domain binding"/>
    <property type="evidence" value="ECO:0000250"/>
    <property type="project" value="UniProtKB"/>
</dbReference>
<dbReference type="GO" id="GO:0045182">
    <property type="term" value="F:translation regulator activity"/>
    <property type="evidence" value="ECO:0007669"/>
    <property type="project" value="InterPro"/>
</dbReference>
<dbReference type="GO" id="GO:0006915">
    <property type="term" value="P:apoptotic process"/>
    <property type="evidence" value="ECO:0007669"/>
    <property type="project" value="UniProtKB-KW"/>
</dbReference>
<dbReference type="GO" id="GO:0071363">
    <property type="term" value="P:cellular response to growth factor stimulus"/>
    <property type="evidence" value="ECO:0000250"/>
    <property type="project" value="UniProtKB"/>
</dbReference>
<dbReference type="GO" id="GO:0007369">
    <property type="term" value="P:gastrulation"/>
    <property type="evidence" value="ECO:0007669"/>
    <property type="project" value="UniProtKB-KW"/>
</dbReference>
<dbReference type="GO" id="GO:0030308">
    <property type="term" value="P:negative regulation of cell growth"/>
    <property type="evidence" value="ECO:0000250"/>
    <property type="project" value="UniProtKB"/>
</dbReference>
<dbReference type="GO" id="GO:0050765">
    <property type="term" value="P:negative regulation of phagocytosis"/>
    <property type="evidence" value="ECO:0000250"/>
    <property type="project" value="UniProtKB"/>
</dbReference>
<dbReference type="GO" id="GO:0030178">
    <property type="term" value="P:negative regulation of Wnt signaling pathway"/>
    <property type="evidence" value="ECO:0000250"/>
    <property type="project" value="UniProtKB"/>
</dbReference>
<dbReference type="GO" id="GO:0043065">
    <property type="term" value="P:positive regulation of apoptotic process"/>
    <property type="evidence" value="ECO:0000250"/>
    <property type="project" value="UniProtKB"/>
</dbReference>
<dbReference type="GO" id="GO:0030335">
    <property type="term" value="P:positive regulation of cell migration"/>
    <property type="evidence" value="ECO:0000250"/>
    <property type="project" value="UniProtKB"/>
</dbReference>
<dbReference type="GO" id="GO:2000543">
    <property type="term" value="P:positive regulation of gastrulation"/>
    <property type="evidence" value="ECO:0000250"/>
    <property type="project" value="UniProtKB"/>
</dbReference>
<dbReference type="GO" id="GO:0042998">
    <property type="term" value="P:positive regulation of Golgi to plasma membrane protein transport"/>
    <property type="evidence" value="ECO:0000250"/>
    <property type="project" value="UniProtKB"/>
</dbReference>
<dbReference type="GO" id="GO:0043547">
    <property type="term" value="P:positive regulation of GTPase activity"/>
    <property type="evidence" value="ECO:0000250"/>
    <property type="project" value="UniProtKB"/>
</dbReference>
<dbReference type="GO" id="GO:0032436">
    <property type="term" value="P:positive regulation of proteasomal ubiquitin-dependent protein catabolic process"/>
    <property type="evidence" value="ECO:0000250"/>
    <property type="project" value="UniProtKB"/>
</dbReference>
<dbReference type="GO" id="GO:0001934">
    <property type="term" value="P:positive regulation of protein phosphorylation"/>
    <property type="evidence" value="ECO:0000250"/>
    <property type="project" value="UniProtKB"/>
</dbReference>
<dbReference type="GO" id="GO:0031334">
    <property type="term" value="P:positive regulation of protein-containing complex assembly"/>
    <property type="evidence" value="ECO:0000250"/>
    <property type="project" value="UniProtKB"/>
</dbReference>
<dbReference type="GO" id="GO:0051726">
    <property type="term" value="P:regulation of cell cycle"/>
    <property type="evidence" value="ECO:0000250"/>
    <property type="project" value="UniProtKB"/>
</dbReference>
<dbReference type="GO" id="GO:0051302">
    <property type="term" value="P:regulation of cell division"/>
    <property type="evidence" value="ECO:0000250"/>
    <property type="project" value="UniProtKB"/>
</dbReference>
<dbReference type="GO" id="GO:2000114">
    <property type="term" value="P:regulation of establishment of cell polarity"/>
    <property type="evidence" value="ECO:0000250"/>
    <property type="project" value="UniProtKB"/>
</dbReference>
<dbReference type="GO" id="GO:0032880">
    <property type="term" value="P:regulation of protein localization"/>
    <property type="evidence" value="ECO:0000250"/>
    <property type="project" value="UniProtKB"/>
</dbReference>
<dbReference type="GO" id="GO:0048511">
    <property type="term" value="P:rhythmic process"/>
    <property type="evidence" value="ECO:0007669"/>
    <property type="project" value="UniProtKB-KW"/>
</dbReference>
<dbReference type="CDD" id="cd00200">
    <property type="entry name" value="WD40"/>
    <property type="match status" value="1"/>
</dbReference>
<dbReference type="FunFam" id="2.130.10.10:FF:001252">
    <property type="entry name" value="Receptor of activated protein C kinase 1"/>
    <property type="match status" value="1"/>
</dbReference>
<dbReference type="Gene3D" id="2.130.10.10">
    <property type="entry name" value="YVTN repeat-like/Quinoprotein amine dehydrogenase"/>
    <property type="match status" value="1"/>
</dbReference>
<dbReference type="InterPro" id="IPR020472">
    <property type="entry name" value="G-protein_beta_WD-40_rep"/>
</dbReference>
<dbReference type="InterPro" id="IPR045223">
    <property type="entry name" value="RACK1-like"/>
</dbReference>
<dbReference type="InterPro" id="IPR015943">
    <property type="entry name" value="WD40/YVTN_repeat-like_dom_sf"/>
</dbReference>
<dbReference type="InterPro" id="IPR019775">
    <property type="entry name" value="WD40_repeat_CS"/>
</dbReference>
<dbReference type="InterPro" id="IPR036322">
    <property type="entry name" value="WD40_repeat_dom_sf"/>
</dbReference>
<dbReference type="InterPro" id="IPR001680">
    <property type="entry name" value="WD40_rpt"/>
</dbReference>
<dbReference type="PANTHER" id="PTHR19868">
    <property type="entry name" value="RECEPTOR FOR ACTIVATED PROTEIN KINASE C RACK1"/>
    <property type="match status" value="1"/>
</dbReference>
<dbReference type="Pfam" id="PF00400">
    <property type="entry name" value="WD40"/>
    <property type="match status" value="7"/>
</dbReference>
<dbReference type="PRINTS" id="PR00320">
    <property type="entry name" value="GPROTEINBRPT"/>
</dbReference>
<dbReference type="SMART" id="SM00320">
    <property type="entry name" value="WD40"/>
    <property type="match status" value="7"/>
</dbReference>
<dbReference type="SUPFAM" id="SSF50978">
    <property type="entry name" value="WD40 repeat-like"/>
    <property type="match status" value="1"/>
</dbReference>
<dbReference type="PROSITE" id="PS00678">
    <property type="entry name" value="WD_REPEATS_1"/>
    <property type="match status" value="4"/>
</dbReference>
<dbReference type="PROSITE" id="PS50082">
    <property type="entry name" value="WD_REPEATS_2"/>
    <property type="match status" value="6"/>
</dbReference>
<dbReference type="PROSITE" id="PS50294">
    <property type="entry name" value="WD_REPEATS_REGION"/>
    <property type="match status" value="1"/>
</dbReference>
<feature type="chain" id="PRO_0000424481" description="Small ribosomal subunit protein RACK1">
    <location>
        <begin position="1"/>
        <end position="317"/>
    </location>
</feature>
<feature type="initiator methionine" description="Removed; alternate" evidence="2">
    <location>
        <position position="1"/>
    </location>
</feature>
<feature type="chain" id="PRO_0000232130" description="Small ribosomal subunit protein RACK1, N-terminally processed">
    <location>
        <begin position="2"/>
        <end position="317"/>
    </location>
</feature>
<feature type="repeat" description="WD 1">
    <location>
        <begin position="13"/>
        <end position="44"/>
    </location>
</feature>
<feature type="repeat" description="WD 2">
    <location>
        <begin position="61"/>
        <end position="91"/>
    </location>
</feature>
<feature type="repeat" description="WD 3">
    <location>
        <begin position="103"/>
        <end position="133"/>
    </location>
</feature>
<feature type="repeat" description="WD 4">
    <location>
        <begin position="146"/>
        <end position="178"/>
    </location>
</feature>
<feature type="repeat" description="WD 5">
    <location>
        <begin position="190"/>
        <end position="220"/>
    </location>
</feature>
<feature type="repeat" description="WD 6">
    <location>
        <begin position="231"/>
        <end position="260"/>
    </location>
</feature>
<feature type="repeat" description="WD 7">
    <location>
        <begin position="281"/>
        <end position="311"/>
    </location>
</feature>
<feature type="modified residue" description="N-acetylmethionine" evidence="2">
    <location>
        <position position="1"/>
    </location>
</feature>
<feature type="modified residue" description="N-acetylthreonine; in Guanine nucleotide-binding protein subunit beta-2-like 1, N-terminally processed" evidence="2">
    <location>
        <position position="2"/>
    </location>
</feature>
<feature type="modified residue" description="Phosphothreonine" evidence="2">
    <location>
        <position position="6"/>
    </location>
</feature>
<feature type="modified residue" description="Phosphothreonine" evidence="2">
    <location>
        <position position="10"/>
    </location>
</feature>
<feature type="modified residue" description="Phosphotyrosine; by ABL1" evidence="2">
    <location>
        <position position="52"/>
    </location>
</feature>
<feature type="modified residue" description="Phosphothreonine" evidence="2">
    <location>
        <position position="96"/>
    </location>
</feature>
<feature type="modified residue" description="N6-acetyllysine" evidence="2">
    <location>
        <position position="130"/>
    </location>
</feature>
<feature type="modified residue" description="N6-acetyllysine" evidence="3">
    <location>
        <position position="183"/>
    </location>
</feature>
<feature type="modified residue" description="Phosphotyrosine" evidence="2">
    <location>
        <position position="228"/>
    </location>
</feature>
<feature type="modified residue" description="Phosphoserine" evidence="2">
    <location>
        <position position="276"/>
    </location>
</feature>
<feature type="modified residue" description="Phosphothreonine" evidence="2">
    <location>
        <position position="277"/>
    </location>
</feature>
<feature type="modified residue" description="Phosphoserine" evidence="2">
    <location>
        <position position="278"/>
    </location>
</feature>
<feature type="modified residue" description="Phosphoserine" evidence="2">
    <location>
        <position position="279"/>
    </location>
</feature>
<feature type="modified residue" description="Phosphothreonine" evidence="3">
    <location>
        <position position="316"/>
    </location>
</feature>
<reference key="1">
    <citation type="submission" date="2005-06" db="EMBL/GenBank/DDBJ databases">
        <title>DNA sequences of macaque genes expressed in brain or testis and its evolutionary implications.</title>
        <authorList>
            <consortium name="International consortium for macaque cDNA sequencing and analysis"/>
        </authorList>
    </citation>
    <scope>NUCLEOTIDE SEQUENCE [LARGE SCALE MRNA]</scope>
    <source>
        <tissue>Testis</tissue>
    </source>
</reference>
<keyword id="KW-0007">Acetylation</keyword>
<keyword id="KW-0053">Apoptosis</keyword>
<keyword id="KW-0090">Biological rhythms</keyword>
<keyword id="KW-0131">Cell cycle</keyword>
<keyword id="KW-1003">Cell membrane</keyword>
<keyword id="KW-0966">Cell projection</keyword>
<keyword id="KW-0963">Cytoplasm</keyword>
<keyword id="KW-0217">Developmental protein</keyword>
<keyword id="KW-0306">Gastrulation</keyword>
<keyword id="KW-0341">Growth regulation</keyword>
<keyword id="KW-0472">Membrane</keyword>
<keyword id="KW-0539">Nucleus</keyword>
<keyword id="KW-0597">Phosphoprotein</keyword>
<keyword id="KW-1185">Reference proteome</keyword>
<keyword id="KW-0677">Repeat</keyword>
<keyword id="KW-0687">Ribonucleoprotein</keyword>
<keyword id="KW-0689">Ribosomal protein</keyword>
<keyword id="KW-0810">Translation regulation</keyword>
<keyword id="KW-0853">WD repeat</keyword>
<sequence>MTEQMTLRGTLKGHNGWVTQIATTPQFPDMILSASRDKTIIMWKLTRDETNYGIPQRALRGHSHFVSDVVISSDGQFALSGSWDGTLRLWDLTTGTTTRRFVGHTKDVLSVAFSSDNRQIVSGSRDKTIKLWNTLGVCKYTVQDESHSEWVSCVRFSPNSSNPIIVSCGWDKLVKVWNLANCKLKTNHIGHTGYLNTVTVSPDGSLCASGGKDGQAMLWDLNEGKHLYTLDGGDIINALCFSPNRYWLCAATGPSIKIWDLEGKIIVDELKQEVISTSSKAEPPQCTSLAWSADGQTLFAGYTDNLVRVWQVTIGTR</sequence>
<proteinExistence type="evidence at transcript level"/>
<evidence type="ECO:0000250" key="1"/>
<evidence type="ECO:0000250" key="2">
    <source>
        <dbReference type="UniProtKB" id="P63244"/>
    </source>
</evidence>
<evidence type="ECO:0000250" key="3">
    <source>
        <dbReference type="UniProtKB" id="P68040"/>
    </source>
</evidence>
<evidence type="ECO:0000305" key="4"/>
<name>GBLP_MACFA</name>
<protein>
    <recommendedName>
        <fullName evidence="4">Small ribosomal subunit protein RACK1</fullName>
    </recommendedName>
    <alternativeName>
        <fullName>Guanine nucleotide-binding protein subunit beta-2-like 1</fullName>
    </alternativeName>
    <component>
        <recommendedName>
            <fullName>Small ribosomal subunit protein RACK1, N-terminally processed</fullName>
        </recommendedName>
        <alternativeName>
            <fullName>Guanine nucleotide-binding protein subunit beta-2-like 1, N-terminally processed</fullName>
        </alternativeName>
    </component>
</protein>
<gene>
    <name type="primary">GNB2L1</name>
    <name type="ORF">QtsA-14081</name>
</gene>